<evidence type="ECO:0000255" key="1">
    <source>
        <dbReference type="HAMAP-Rule" id="MF_00061"/>
    </source>
</evidence>
<proteinExistence type="inferred from homology"/>
<organism>
    <name type="scientific">Prochlorococcus marinus (strain MIT 9515)</name>
    <dbReference type="NCBI Taxonomy" id="167542"/>
    <lineage>
        <taxon>Bacteria</taxon>
        <taxon>Bacillati</taxon>
        <taxon>Cyanobacteriota</taxon>
        <taxon>Cyanophyceae</taxon>
        <taxon>Synechococcales</taxon>
        <taxon>Prochlorococcaceae</taxon>
        <taxon>Prochlorococcus</taxon>
    </lineage>
</organism>
<reference key="1">
    <citation type="journal article" date="2007" name="PLoS Genet.">
        <title>Patterns and implications of gene gain and loss in the evolution of Prochlorococcus.</title>
        <authorList>
            <person name="Kettler G.C."/>
            <person name="Martiny A.C."/>
            <person name="Huang K."/>
            <person name="Zucker J."/>
            <person name="Coleman M.L."/>
            <person name="Rodrigue S."/>
            <person name="Chen F."/>
            <person name="Lapidus A."/>
            <person name="Ferriera S."/>
            <person name="Johnson J."/>
            <person name="Steglich C."/>
            <person name="Church G.M."/>
            <person name="Richardson P."/>
            <person name="Chisholm S.W."/>
        </authorList>
    </citation>
    <scope>NUCLEOTIDE SEQUENCE [LARGE SCALE GENOMIC DNA]</scope>
    <source>
        <strain>MIT 9515</strain>
    </source>
</reference>
<sequence length="312" mass="34941">MTKLSTTKICVKSPAKINLHLEIIGKREDGYHELAMIMQNIDLFDYIEFENNQIGDIELKSNNKDLSLKDDNLIIKAANYVKDISKKKDLGANIFLKKNIPIGAGLAGGSSNAAATIIGLNKLWDLDLDNETMLSLSSKLGSDVPFFINGGCQFCFGRGEILENYNSKFDYGVILLKNPNISISTADTYKKYSKEYCSNFLTESEKTNDIRNDLRINGFNDLNSSNQIIKVKNDLQIIVEKENDSVKKALYLLSNLQNCLSFSMSGSGPTCFALFKDINKANEVFEQNHKMFNNNGFEAWVCKLINSGITFL</sequence>
<accession>A2BWR1</accession>
<name>ISPE_PROM5</name>
<feature type="chain" id="PRO_1000007872" description="4-diphosphocytidyl-2-C-methyl-D-erythritol kinase">
    <location>
        <begin position="1"/>
        <end position="312"/>
    </location>
</feature>
<feature type="active site" evidence="1">
    <location>
        <position position="16"/>
    </location>
</feature>
<feature type="active site" evidence="1">
    <location>
        <position position="143"/>
    </location>
</feature>
<feature type="binding site" evidence="1">
    <location>
        <begin position="101"/>
        <end position="111"/>
    </location>
    <ligand>
        <name>ATP</name>
        <dbReference type="ChEBI" id="CHEBI:30616"/>
    </ligand>
</feature>
<keyword id="KW-0067">ATP-binding</keyword>
<keyword id="KW-0414">Isoprene biosynthesis</keyword>
<keyword id="KW-0418">Kinase</keyword>
<keyword id="KW-0547">Nucleotide-binding</keyword>
<keyword id="KW-0808">Transferase</keyword>
<gene>
    <name evidence="1" type="primary">ispE</name>
    <name type="ordered locus">P9515_10151</name>
</gene>
<comment type="function">
    <text evidence="1">Catalyzes the phosphorylation of the position 2 hydroxy group of 4-diphosphocytidyl-2C-methyl-D-erythritol.</text>
</comment>
<comment type="catalytic activity">
    <reaction evidence="1">
        <text>4-CDP-2-C-methyl-D-erythritol + ATP = 4-CDP-2-C-methyl-D-erythritol 2-phosphate + ADP + H(+)</text>
        <dbReference type="Rhea" id="RHEA:18437"/>
        <dbReference type="ChEBI" id="CHEBI:15378"/>
        <dbReference type="ChEBI" id="CHEBI:30616"/>
        <dbReference type="ChEBI" id="CHEBI:57823"/>
        <dbReference type="ChEBI" id="CHEBI:57919"/>
        <dbReference type="ChEBI" id="CHEBI:456216"/>
        <dbReference type="EC" id="2.7.1.148"/>
    </reaction>
</comment>
<comment type="pathway">
    <text evidence="1">Isoprenoid biosynthesis; isopentenyl diphosphate biosynthesis via DXP pathway; isopentenyl diphosphate from 1-deoxy-D-xylulose 5-phosphate: step 3/6.</text>
</comment>
<comment type="similarity">
    <text evidence="1">Belongs to the GHMP kinase family. IspE subfamily.</text>
</comment>
<protein>
    <recommendedName>
        <fullName evidence="1">4-diphosphocytidyl-2-C-methyl-D-erythritol kinase</fullName>
        <shortName evidence="1">CMK</shortName>
        <ecNumber evidence="1">2.7.1.148</ecNumber>
    </recommendedName>
    <alternativeName>
        <fullName evidence="1">4-(cytidine-5'-diphospho)-2-C-methyl-D-erythritol kinase</fullName>
    </alternativeName>
</protein>
<dbReference type="EC" id="2.7.1.148" evidence="1"/>
<dbReference type="EMBL" id="CP000552">
    <property type="protein sequence ID" value="ABM72222.1"/>
    <property type="molecule type" value="Genomic_DNA"/>
</dbReference>
<dbReference type="RefSeq" id="WP_011820323.1">
    <property type="nucleotide sequence ID" value="NC_008817.1"/>
</dbReference>
<dbReference type="SMR" id="A2BWR1"/>
<dbReference type="STRING" id="167542.P9515_10151"/>
<dbReference type="GeneID" id="60200607"/>
<dbReference type="KEGG" id="pmc:P9515_10151"/>
<dbReference type="eggNOG" id="COG1947">
    <property type="taxonomic scope" value="Bacteria"/>
</dbReference>
<dbReference type="HOGENOM" id="CLU_053057_3_0_3"/>
<dbReference type="OrthoDB" id="9809438at2"/>
<dbReference type="UniPathway" id="UPA00056">
    <property type="reaction ID" value="UER00094"/>
</dbReference>
<dbReference type="Proteomes" id="UP000001589">
    <property type="component" value="Chromosome"/>
</dbReference>
<dbReference type="GO" id="GO:0050515">
    <property type="term" value="F:4-(cytidine 5'-diphospho)-2-C-methyl-D-erythritol kinase activity"/>
    <property type="evidence" value="ECO:0007669"/>
    <property type="project" value="UniProtKB-UniRule"/>
</dbReference>
<dbReference type="GO" id="GO:0005524">
    <property type="term" value="F:ATP binding"/>
    <property type="evidence" value="ECO:0007669"/>
    <property type="project" value="UniProtKB-UniRule"/>
</dbReference>
<dbReference type="GO" id="GO:0019288">
    <property type="term" value="P:isopentenyl diphosphate biosynthetic process, methylerythritol 4-phosphate pathway"/>
    <property type="evidence" value="ECO:0007669"/>
    <property type="project" value="UniProtKB-UniRule"/>
</dbReference>
<dbReference type="GO" id="GO:0016114">
    <property type="term" value="P:terpenoid biosynthetic process"/>
    <property type="evidence" value="ECO:0007669"/>
    <property type="project" value="InterPro"/>
</dbReference>
<dbReference type="Gene3D" id="3.30.230.10">
    <property type="match status" value="1"/>
</dbReference>
<dbReference type="Gene3D" id="3.30.70.890">
    <property type="entry name" value="GHMP kinase, C-terminal domain"/>
    <property type="match status" value="1"/>
</dbReference>
<dbReference type="HAMAP" id="MF_00061">
    <property type="entry name" value="IspE"/>
    <property type="match status" value="1"/>
</dbReference>
<dbReference type="InterPro" id="IPR013750">
    <property type="entry name" value="GHMP_kinase_C_dom"/>
</dbReference>
<dbReference type="InterPro" id="IPR036554">
    <property type="entry name" value="GHMP_kinase_C_sf"/>
</dbReference>
<dbReference type="InterPro" id="IPR006204">
    <property type="entry name" value="GHMP_kinase_N_dom"/>
</dbReference>
<dbReference type="InterPro" id="IPR004424">
    <property type="entry name" value="IspE"/>
</dbReference>
<dbReference type="InterPro" id="IPR020568">
    <property type="entry name" value="Ribosomal_Su5_D2-typ_SF"/>
</dbReference>
<dbReference type="InterPro" id="IPR014721">
    <property type="entry name" value="Ribsml_uS5_D2-typ_fold_subgr"/>
</dbReference>
<dbReference type="NCBIfam" id="TIGR00154">
    <property type="entry name" value="ispE"/>
    <property type="match status" value="1"/>
</dbReference>
<dbReference type="PANTHER" id="PTHR43527">
    <property type="entry name" value="4-DIPHOSPHOCYTIDYL-2-C-METHYL-D-ERYTHRITOL KINASE, CHLOROPLASTIC"/>
    <property type="match status" value="1"/>
</dbReference>
<dbReference type="PANTHER" id="PTHR43527:SF2">
    <property type="entry name" value="4-DIPHOSPHOCYTIDYL-2-C-METHYL-D-ERYTHRITOL KINASE, CHLOROPLASTIC"/>
    <property type="match status" value="1"/>
</dbReference>
<dbReference type="Pfam" id="PF08544">
    <property type="entry name" value="GHMP_kinases_C"/>
    <property type="match status" value="1"/>
</dbReference>
<dbReference type="Pfam" id="PF00288">
    <property type="entry name" value="GHMP_kinases_N"/>
    <property type="match status" value="1"/>
</dbReference>
<dbReference type="PIRSF" id="PIRSF010376">
    <property type="entry name" value="IspE"/>
    <property type="match status" value="1"/>
</dbReference>
<dbReference type="SUPFAM" id="SSF55060">
    <property type="entry name" value="GHMP Kinase, C-terminal domain"/>
    <property type="match status" value="1"/>
</dbReference>
<dbReference type="SUPFAM" id="SSF54211">
    <property type="entry name" value="Ribosomal protein S5 domain 2-like"/>
    <property type="match status" value="1"/>
</dbReference>